<name>NU2C2_GOSHI</name>
<evidence type="ECO:0000255" key="1">
    <source>
        <dbReference type="HAMAP-Rule" id="MF_00445"/>
    </source>
</evidence>
<protein>
    <recommendedName>
        <fullName evidence="1">NAD(P)H-quinone oxidoreductase subunit 2 B, chloroplastic</fullName>
        <ecNumber evidence="1">7.1.1.-</ecNumber>
    </recommendedName>
    <alternativeName>
        <fullName evidence="1">NAD(P)H dehydrogenase, subunit 2 B</fullName>
    </alternativeName>
    <alternativeName>
        <fullName evidence="1">NADH-plastoquinone oxidoreductase subunit 2 B</fullName>
    </alternativeName>
</protein>
<accession>P0CC67</accession>
<accession>Q2L947</accession>
<geneLocation type="chloroplast"/>
<sequence>MIWHVQNENFILDSTRIFMKAFHLLLFDGSFIFPECILIFGLILLLMIDSTSDQKDIPWLYFISSTSLVMSITALLFRWREEPMISFSGNFQTNNFNEIFQFLILLCSTLCIPLSVEYIECTEMAIAEFLLFVLTATLGGMFLCGANDLITIFVAPECFSLCSYLLSGYTKKDVRSNEATTKYLLMGGASSSILVHGFSWLYGSSGGEIELQEIVNGLINTQMYNSPGISIALIFITVGIGFKLSPAPSHQWTPDVYEGSPTPVVAFLSVTSKVAASASATRIFDIPFYFSSNEWHLLLEILAILSMILGNLIAITQTSMKRMLAYSSIGQIGYVIIGIIVGDSNGGYASMITYMLFYISMNLGTFACIVLFGLRTGTDNIRDYAGLYTKDPFLALSLALCLLSLGGLPPLAGFFGKLHLFWCGWQAGLYFLVSIGLLTSVVSIYYYLKIIKLLMTGRNQEITPHVRNYRRSPLRSNNSIELSMIVCVIASTIPGISMNPIIAIAQDTLF</sequence>
<gene>
    <name evidence="1" type="primary">ndhB2</name>
</gene>
<feature type="chain" id="PRO_0000391271" description="NAD(P)H-quinone oxidoreductase subunit 2 B, chloroplastic">
    <location>
        <begin position="1"/>
        <end position="510"/>
    </location>
</feature>
<feature type="transmembrane region" description="Helical" evidence="1">
    <location>
        <begin position="24"/>
        <end position="44"/>
    </location>
</feature>
<feature type="transmembrane region" description="Helical" evidence="1">
    <location>
        <begin position="57"/>
        <end position="77"/>
    </location>
</feature>
<feature type="transmembrane region" description="Helical" evidence="1">
    <location>
        <begin position="99"/>
        <end position="119"/>
    </location>
</feature>
<feature type="transmembrane region" description="Helical" evidence="1">
    <location>
        <begin position="124"/>
        <end position="144"/>
    </location>
</feature>
<feature type="transmembrane region" description="Helical" evidence="1">
    <location>
        <begin position="149"/>
        <end position="169"/>
    </location>
</feature>
<feature type="transmembrane region" description="Helical" evidence="1">
    <location>
        <begin position="183"/>
        <end position="203"/>
    </location>
</feature>
<feature type="transmembrane region" description="Helical" evidence="1">
    <location>
        <begin position="227"/>
        <end position="247"/>
    </location>
</feature>
<feature type="transmembrane region" description="Helical" evidence="1">
    <location>
        <begin position="295"/>
        <end position="315"/>
    </location>
</feature>
<feature type="transmembrane region" description="Helical" evidence="1">
    <location>
        <begin position="323"/>
        <end position="343"/>
    </location>
</feature>
<feature type="transmembrane region" description="Helical" evidence="1">
    <location>
        <begin position="354"/>
        <end position="374"/>
    </location>
</feature>
<feature type="transmembrane region" description="Helical" evidence="1">
    <location>
        <begin position="395"/>
        <end position="415"/>
    </location>
</feature>
<feature type="transmembrane region" description="Helical" evidence="1">
    <location>
        <begin position="418"/>
        <end position="438"/>
    </location>
</feature>
<feature type="transmembrane region" description="Helical" evidence="1">
    <location>
        <begin position="484"/>
        <end position="504"/>
    </location>
</feature>
<reference key="1">
    <citation type="journal article" date="2006" name="BMC Genomics">
        <title>The complete chloroplast genome sequence of Gossypium hirsutum: organization and phylogenetic relationships to other angiosperms.</title>
        <authorList>
            <person name="Lee S.-B."/>
            <person name="Kaittanis C."/>
            <person name="Jansen R.K."/>
            <person name="Hostetler J.B."/>
            <person name="Tallon L.J."/>
            <person name="Town C.D."/>
            <person name="Daniell H."/>
        </authorList>
    </citation>
    <scope>NUCLEOTIDE SEQUENCE [LARGE SCALE GENOMIC DNA]</scope>
    <source>
        <strain>cv. Coker 310FR</strain>
    </source>
</reference>
<keyword id="KW-0150">Chloroplast</keyword>
<keyword id="KW-0472">Membrane</keyword>
<keyword id="KW-0520">NAD</keyword>
<keyword id="KW-0521">NADP</keyword>
<keyword id="KW-0934">Plastid</keyword>
<keyword id="KW-0618">Plastoquinone</keyword>
<keyword id="KW-0874">Quinone</keyword>
<keyword id="KW-1185">Reference proteome</keyword>
<keyword id="KW-0793">Thylakoid</keyword>
<keyword id="KW-1278">Translocase</keyword>
<keyword id="KW-0812">Transmembrane</keyword>
<keyword id="KW-1133">Transmembrane helix</keyword>
<keyword id="KW-0813">Transport</keyword>
<comment type="function">
    <text evidence="1">NDH shuttles electrons from NAD(P)H:plastoquinone, via FMN and iron-sulfur (Fe-S) centers, to quinones in the photosynthetic chain and possibly in a chloroplast respiratory chain. The immediate electron acceptor for the enzyme in this species is believed to be plastoquinone. Couples the redox reaction to proton translocation, and thus conserves the redox energy in a proton gradient.</text>
</comment>
<comment type="catalytic activity">
    <reaction evidence="1">
        <text>a plastoquinone + NADH + (n+1) H(+)(in) = a plastoquinol + NAD(+) + n H(+)(out)</text>
        <dbReference type="Rhea" id="RHEA:42608"/>
        <dbReference type="Rhea" id="RHEA-COMP:9561"/>
        <dbReference type="Rhea" id="RHEA-COMP:9562"/>
        <dbReference type="ChEBI" id="CHEBI:15378"/>
        <dbReference type="ChEBI" id="CHEBI:17757"/>
        <dbReference type="ChEBI" id="CHEBI:57540"/>
        <dbReference type="ChEBI" id="CHEBI:57945"/>
        <dbReference type="ChEBI" id="CHEBI:62192"/>
    </reaction>
</comment>
<comment type="catalytic activity">
    <reaction evidence="1">
        <text>a plastoquinone + NADPH + (n+1) H(+)(in) = a plastoquinol + NADP(+) + n H(+)(out)</text>
        <dbReference type="Rhea" id="RHEA:42612"/>
        <dbReference type="Rhea" id="RHEA-COMP:9561"/>
        <dbReference type="Rhea" id="RHEA-COMP:9562"/>
        <dbReference type="ChEBI" id="CHEBI:15378"/>
        <dbReference type="ChEBI" id="CHEBI:17757"/>
        <dbReference type="ChEBI" id="CHEBI:57783"/>
        <dbReference type="ChEBI" id="CHEBI:58349"/>
        <dbReference type="ChEBI" id="CHEBI:62192"/>
    </reaction>
</comment>
<comment type="subunit">
    <text evidence="1">NDH is composed of at least 16 different subunits, 5 of which are encoded in the nucleus.</text>
</comment>
<comment type="subcellular location">
    <subcellularLocation>
        <location evidence="1">Plastid</location>
        <location evidence="1">Chloroplast thylakoid membrane</location>
        <topology evidence="1">Multi-pass membrane protein</topology>
    </subcellularLocation>
</comment>
<comment type="similarity">
    <text evidence="1">Belongs to the complex I subunit 2 family.</text>
</comment>
<proteinExistence type="inferred from homology"/>
<dbReference type="EC" id="7.1.1.-" evidence="1"/>
<dbReference type="EMBL" id="DQ345959">
    <property type="protein sequence ID" value="ABC73688.1"/>
    <property type="molecule type" value="Genomic_DNA"/>
</dbReference>
<dbReference type="SMR" id="P0CC67"/>
<dbReference type="KEGG" id="ghi:3989173"/>
<dbReference type="KEGG" id="ghi:3989219"/>
<dbReference type="OrthoDB" id="70387at41938"/>
<dbReference type="Proteomes" id="UP000189702">
    <property type="component" value="Unplaced"/>
</dbReference>
<dbReference type="GO" id="GO:0009535">
    <property type="term" value="C:chloroplast thylakoid membrane"/>
    <property type="evidence" value="ECO:0007669"/>
    <property type="project" value="UniProtKB-SubCell"/>
</dbReference>
<dbReference type="GO" id="GO:0008137">
    <property type="term" value="F:NADH dehydrogenase (ubiquinone) activity"/>
    <property type="evidence" value="ECO:0007669"/>
    <property type="project" value="InterPro"/>
</dbReference>
<dbReference type="GO" id="GO:0048038">
    <property type="term" value="F:quinone binding"/>
    <property type="evidence" value="ECO:0007669"/>
    <property type="project" value="UniProtKB-KW"/>
</dbReference>
<dbReference type="GO" id="GO:0042773">
    <property type="term" value="P:ATP synthesis coupled electron transport"/>
    <property type="evidence" value="ECO:0007669"/>
    <property type="project" value="InterPro"/>
</dbReference>
<dbReference type="GO" id="GO:0019684">
    <property type="term" value="P:photosynthesis, light reaction"/>
    <property type="evidence" value="ECO:0007669"/>
    <property type="project" value="UniProtKB-UniRule"/>
</dbReference>
<dbReference type="HAMAP" id="MF_00445">
    <property type="entry name" value="NDH1_NuoN_1"/>
    <property type="match status" value="1"/>
</dbReference>
<dbReference type="InterPro" id="IPR010096">
    <property type="entry name" value="NADH-Q_OxRdtase_suN/2"/>
</dbReference>
<dbReference type="InterPro" id="IPR001750">
    <property type="entry name" value="ND/Mrp_TM"/>
</dbReference>
<dbReference type="InterPro" id="IPR045693">
    <property type="entry name" value="Ndh2_N"/>
</dbReference>
<dbReference type="NCBIfam" id="TIGR01770">
    <property type="entry name" value="NDH_I_N"/>
    <property type="match status" value="1"/>
</dbReference>
<dbReference type="NCBIfam" id="NF002701">
    <property type="entry name" value="PRK02504.1"/>
    <property type="match status" value="1"/>
</dbReference>
<dbReference type="PANTHER" id="PTHR22773">
    <property type="entry name" value="NADH DEHYDROGENASE"/>
    <property type="match status" value="1"/>
</dbReference>
<dbReference type="Pfam" id="PF19530">
    <property type="entry name" value="Ndh2_N"/>
    <property type="match status" value="1"/>
</dbReference>
<dbReference type="Pfam" id="PF00361">
    <property type="entry name" value="Proton_antipo_M"/>
    <property type="match status" value="1"/>
</dbReference>
<dbReference type="PRINTS" id="PR01434">
    <property type="entry name" value="NADHDHGNASE5"/>
</dbReference>
<organism>
    <name type="scientific">Gossypium hirsutum</name>
    <name type="common">Upland cotton</name>
    <name type="synonym">Gossypium mexicanum</name>
    <dbReference type="NCBI Taxonomy" id="3635"/>
    <lineage>
        <taxon>Eukaryota</taxon>
        <taxon>Viridiplantae</taxon>
        <taxon>Streptophyta</taxon>
        <taxon>Embryophyta</taxon>
        <taxon>Tracheophyta</taxon>
        <taxon>Spermatophyta</taxon>
        <taxon>Magnoliopsida</taxon>
        <taxon>eudicotyledons</taxon>
        <taxon>Gunneridae</taxon>
        <taxon>Pentapetalae</taxon>
        <taxon>rosids</taxon>
        <taxon>malvids</taxon>
        <taxon>Malvales</taxon>
        <taxon>Malvaceae</taxon>
        <taxon>Malvoideae</taxon>
        <taxon>Gossypium</taxon>
    </lineage>
</organism>